<name>PDXH_BRUA1</name>
<gene>
    <name evidence="1" type="primary">pdxH</name>
    <name type="ordered locus">BAbS19_I04090</name>
</gene>
<organism>
    <name type="scientific">Brucella abortus (strain S19)</name>
    <dbReference type="NCBI Taxonomy" id="430066"/>
    <lineage>
        <taxon>Bacteria</taxon>
        <taxon>Pseudomonadati</taxon>
        <taxon>Pseudomonadota</taxon>
        <taxon>Alphaproteobacteria</taxon>
        <taxon>Hyphomicrobiales</taxon>
        <taxon>Brucellaceae</taxon>
        <taxon>Brucella/Ochrobactrum group</taxon>
        <taxon>Brucella</taxon>
    </lineage>
</organism>
<accession>B2S9Q7</accession>
<keyword id="KW-0285">Flavoprotein</keyword>
<keyword id="KW-0288">FMN</keyword>
<keyword id="KW-0560">Oxidoreductase</keyword>
<keyword id="KW-0664">Pyridoxine biosynthesis</keyword>
<sequence>MTNSSDDFTQSAEPFKLFAEWLADAAKSEPNDPNAVALATVDPDGLPNVRMVLLKDFDETGFVFYTNYESKKGQEILSAEKAAMCFHWKSLRRQVRVRGPVEKVSDAEADAYYASRPRGSRIGAWASKQSRPLESRFALEKAVAEYTAKYAIGDIPRPPYWSGFRIRPVSIEFWHDRPFRLHDRVLFTRPTPEGDWNKDRLYP</sequence>
<comment type="function">
    <text evidence="1">Catalyzes the oxidation of either pyridoxine 5'-phosphate (PNP) or pyridoxamine 5'-phosphate (PMP) into pyridoxal 5'-phosphate (PLP).</text>
</comment>
<comment type="catalytic activity">
    <reaction evidence="1">
        <text>pyridoxamine 5'-phosphate + O2 + H2O = pyridoxal 5'-phosphate + H2O2 + NH4(+)</text>
        <dbReference type="Rhea" id="RHEA:15817"/>
        <dbReference type="ChEBI" id="CHEBI:15377"/>
        <dbReference type="ChEBI" id="CHEBI:15379"/>
        <dbReference type="ChEBI" id="CHEBI:16240"/>
        <dbReference type="ChEBI" id="CHEBI:28938"/>
        <dbReference type="ChEBI" id="CHEBI:58451"/>
        <dbReference type="ChEBI" id="CHEBI:597326"/>
        <dbReference type="EC" id="1.4.3.5"/>
    </reaction>
</comment>
<comment type="catalytic activity">
    <reaction evidence="1">
        <text>pyridoxine 5'-phosphate + O2 = pyridoxal 5'-phosphate + H2O2</text>
        <dbReference type="Rhea" id="RHEA:15149"/>
        <dbReference type="ChEBI" id="CHEBI:15379"/>
        <dbReference type="ChEBI" id="CHEBI:16240"/>
        <dbReference type="ChEBI" id="CHEBI:58589"/>
        <dbReference type="ChEBI" id="CHEBI:597326"/>
        <dbReference type="EC" id="1.4.3.5"/>
    </reaction>
</comment>
<comment type="cofactor">
    <cofactor evidence="1">
        <name>FMN</name>
        <dbReference type="ChEBI" id="CHEBI:58210"/>
    </cofactor>
    <text evidence="1">Binds 1 FMN per subunit.</text>
</comment>
<comment type="pathway">
    <text evidence="1">Cofactor metabolism; pyridoxal 5'-phosphate salvage; pyridoxal 5'-phosphate from pyridoxamine 5'-phosphate: step 1/1.</text>
</comment>
<comment type="pathway">
    <text evidence="1">Cofactor metabolism; pyridoxal 5'-phosphate salvage; pyridoxal 5'-phosphate from pyridoxine 5'-phosphate: step 1/1.</text>
</comment>
<comment type="subunit">
    <text evidence="1">Homodimer.</text>
</comment>
<comment type="similarity">
    <text evidence="1">Belongs to the pyridoxamine 5'-phosphate oxidase family.</text>
</comment>
<feature type="chain" id="PRO_1000186290" description="Pyridoxine/pyridoxamine 5'-phosphate oxidase">
    <location>
        <begin position="1"/>
        <end position="203"/>
    </location>
</feature>
<feature type="binding site" evidence="1">
    <location>
        <begin position="50"/>
        <end position="55"/>
    </location>
    <ligand>
        <name>FMN</name>
        <dbReference type="ChEBI" id="CHEBI:58210"/>
    </ligand>
</feature>
<feature type="binding site" evidence="1">
    <location>
        <position position="55"/>
    </location>
    <ligand>
        <name>substrate</name>
    </ligand>
</feature>
<feature type="binding site" evidence="1">
    <location>
        <begin position="65"/>
        <end position="66"/>
    </location>
    <ligand>
        <name>FMN</name>
        <dbReference type="ChEBI" id="CHEBI:58210"/>
    </ligand>
</feature>
<feature type="binding site" evidence="1">
    <location>
        <position position="71"/>
    </location>
    <ligand>
        <name>FMN</name>
        <dbReference type="ChEBI" id="CHEBI:58210"/>
    </ligand>
</feature>
<feature type="binding site" evidence="1">
    <location>
        <position position="72"/>
    </location>
    <ligand>
        <name>FMN</name>
        <dbReference type="ChEBI" id="CHEBI:58210"/>
    </ligand>
</feature>
<feature type="binding site" evidence="1">
    <location>
        <position position="94"/>
    </location>
    <ligand>
        <name>FMN</name>
        <dbReference type="ChEBI" id="CHEBI:58210"/>
    </ligand>
</feature>
<feature type="binding site" evidence="1">
    <location>
        <position position="112"/>
    </location>
    <ligand>
        <name>substrate</name>
    </ligand>
</feature>
<feature type="binding site" evidence="1">
    <location>
        <position position="116"/>
    </location>
    <ligand>
        <name>substrate</name>
    </ligand>
</feature>
<feature type="binding site" evidence="1">
    <location>
        <position position="120"/>
    </location>
    <ligand>
        <name>substrate</name>
    </ligand>
</feature>
<feature type="binding site" evidence="1">
    <location>
        <begin position="129"/>
        <end position="130"/>
    </location>
    <ligand>
        <name>FMN</name>
        <dbReference type="ChEBI" id="CHEBI:58210"/>
    </ligand>
</feature>
<feature type="binding site" evidence="1">
    <location>
        <position position="174"/>
    </location>
    <ligand>
        <name>FMN</name>
        <dbReference type="ChEBI" id="CHEBI:58210"/>
    </ligand>
</feature>
<feature type="binding site" evidence="1">
    <location>
        <begin position="180"/>
        <end position="182"/>
    </location>
    <ligand>
        <name>substrate</name>
    </ligand>
</feature>
<feature type="binding site" evidence="1">
    <location>
        <position position="184"/>
    </location>
    <ligand>
        <name>FMN</name>
        <dbReference type="ChEBI" id="CHEBI:58210"/>
    </ligand>
</feature>
<dbReference type="EC" id="1.4.3.5" evidence="1"/>
<dbReference type="EMBL" id="CP000887">
    <property type="protein sequence ID" value="ACD71948.1"/>
    <property type="molecule type" value="Genomic_DNA"/>
</dbReference>
<dbReference type="RefSeq" id="WP_002971565.1">
    <property type="nucleotide sequence ID" value="NC_010742.1"/>
</dbReference>
<dbReference type="SMR" id="B2S9Q7"/>
<dbReference type="GeneID" id="97534209"/>
<dbReference type="KEGG" id="bmc:BAbS19_I04090"/>
<dbReference type="HOGENOM" id="CLU_032263_2_3_5"/>
<dbReference type="UniPathway" id="UPA01068">
    <property type="reaction ID" value="UER00304"/>
</dbReference>
<dbReference type="UniPathway" id="UPA01068">
    <property type="reaction ID" value="UER00305"/>
</dbReference>
<dbReference type="Proteomes" id="UP000002565">
    <property type="component" value="Chromosome 1"/>
</dbReference>
<dbReference type="GO" id="GO:0010181">
    <property type="term" value="F:FMN binding"/>
    <property type="evidence" value="ECO:0007669"/>
    <property type="project" value="UniProtKB-UniRule"/>
</dbReference>
<dbReference type="GO" id="GO:0004733">
    <property type="term" value="F:pyridoxamine phosphate oxidase activity"/>
    <property type="evidence" value="ECO:0007669"/>
    <property type="project" value="UniProtKB-UniRule"/>
</dbReference>
<dbReference type="GO" id="GO:0008615">
    <property type="term" value="P:pyridoxine biosynthetic process"/>
    <property type="evidence" value="ECO:0007669"/>
    <property type="project" value="UniProtKB-KW"/>
</dbReference>
<dbReference type="Gene3D" id="2.30.110.10">
    <property type="entry name" value="Electron Transport, Fmn-binding Protein, Chain A"/>
    <property type="match status" value="1"/>
</dbReference>
<dbReference type="HAMAP" id="MF_01629">
    <property type="entry name" value="PdxH"/>
    <property type="match status" value="1"/>
</dbReference>
<dbReference type="InterPro" id="IPR000659">
    <property type="entry name" value="Pyridox_Oxase"/>
</dbReference>
<dbReference type="InterPro" id="IPR019740">
    <property type="entry name" value="Pyridox_Oxase_CS"/>
</dbReference>
<dbReference type="InterPro" id="IPR011576">
    <property type="entry name" value="Pyridox_Oxase_N"/>
</dbReference>
<dbReference type="InterPro" id="IPR019576">
    <property type="entry name" value="Pyridoxamine_oxidase_dimer_C"/>
</dbReference>
<dbReference type="InterPro" id="IPR012349">
    <property type="entry name" value="Split_barrel_FMN-bd"/>
</dbReference>
<dbReference type="NCBIfam" id="TIGR00558">
    <property type="entry name" value="pdxH"/>
    <property type="match status" value="1"/>
</dbReference>
<dbReference type="NCBIfam" id="NF004231">
    <property type="entry name" value="PRK05679.1"/>
    <property type="match status" value="1"/>
</dbReference>
<dbReference type="PANTHER" id="PTHR10851:SF0">
    <property type="entry name" value="PYRIDOXINE-5'-PHOSPHATE OXIDASE"/>
    <property type="match status" value="1"/>
</dbReference>
<dbReference type="PANTHER" id="PTHR10851">
    <property type="entry name" value="PYRIDOXINE-5-PHOSPHATE OXIDASE"/>
    <property type="match status" value="1"/>
</dbReference>
<dbReference type="Pfam" id="PF10590">
    <property type="entry name" value="PNP_phzG_C"/>
    <property type="match status" value="1"/>
</dbReference>
<dbReference type="Pfam" id="PF01243">
    <property type="entry name" value="PNPOx_N"/>
    <property type="match status" value="1"/>
</dbReference>
<dbReference type="PIRSF" id="PIRSF000190">
    <property type="entry name" value="Pyd_amn-ph_oxd"/>
    <property type="match status" value="1"/>
</dbReference>
<dbReference type="SUPFAM" id="SSF50475">
    <property type="entry name" value="FMN-binding split barrel"/>
    <property type="match status" value="1"/>
</dbReference>
<dbReference type="PROSITE" id="PS01064">
    <property type="entry name" value="PYRIDOX_OXIDASE"/>
    <property type="match status" value="1"/>
</dbReference>
<evidence type="ECO:0000255" key="1">
    <source>
        <dbReference type="HAMAP-Rule" id="MF_01629"/>
    </source>
</evidence>
<proteinExistence type="inferred from homology"/>
<reference key="1">
    <citation type="journal article" date="2008" name="PLoS ONE">
        <title>Genome sequence of Brucella abortus vaccine strain S19 compared to virulent strains yields candidate virulence genes.</title>
        <authorList>
            <person name="Crasta O.R."/>
            <person name="Folkerts O."/>
            <person name="Fei Z."/>
            <person name="Mane S.P."/>
            <person name="Evans C."/>
            <person name="Martino-Catt S."/>
            <person name="Bricker B."/>
            <person name="Yu G."/>
            <person name="Du L."/>
            <person name="Sobral B.W."/>
        </authorList>
    </citation>
    <scope>NUCLEOTIDE SEQUENCE [LARGE SCALE GENOMIC DNA]</scope>
    <source>
        <strain>S19</strain>
    </source>
</reference>
<protein>
    <recommendedName>
        <fullName evidence="1">Pyridoxine/pyridoxamine 5'-phosphate oxidase</fullName>
        <ecNumber evidence="1">1.4.3.5</ecNumber>
    </recommendedName>
    <alternativeName>
        <fullName evidence="1">PNP/PMP oxidase</fullName>
        <shortName evidence="1">PNPOx</shortName>
    </alternativeName>
    <alternativeName>
        <fullName evidence="1">Pyridoxal 5'-phosphate synthase</fullName>
    </alternativeName>
</protein>